<reference key="1">
    <citation type="journal article" date="2004" name="Nat. Genet.">
        <title>Evidence in the Legionella pneumophila genome for exploitation of host cell functions and high genome plasticity.</title>
        <authorList>
            <person name="Cazalet C."/>
            <person name="Rusniok C."/>
            <person name="Brueggemann H."/>
            <person name="Zidane N."/>
            <person name="Magnier A."/>
            <person name="Ma L."/>
            <person name="Tichit M."/>
            <person name="Jarraud S."/>
            <person name="Bouchier C."/>
            <person name="Vandenesch F."/>
            <person name="Kunst F."/>
            <person name="Etienne J."/>
            <person name="Glaser P."/>
            <person name="Buchrieser C."/>
        </authorList>
    </citation>
    <scope>NUCLEOTIDE SEQUENCE [LARGE SCALE GENOMIC DNA]</scope>
    <source>
        <strain>Lens</strain>
    </source>
</reference>
<evidence type="ECO:0000255" key="1">
    <source>
        <dbReference type="HAMAP-Rule" id="MF_00446"/>
    </source>
</evidence>
<accession>Q5WSM2</accession>
<proteinExistence type="inferred from homology"/>
<feature type="chain" id="PRO_0000023099" description="Aspartate 1-decarboxylase beta chain" evidence="1">
    <location>
        <begin position="1"/>
        <end position="25"/>
    </location>
</feature>
<feature type="chain" id="PRO_0000023100" description="Aspartate 1-decarboxylase alpha chain" evidence="1">
    <location>
        <begin position="26"/>
        <end position="133"/>
    </location>
</feature>
<feature type="active site" description="Schiff-base intermediate with substrate; via pyruvic acid" evidence="1">
    <location>
        <position position="26"/>
    </location>
</feature>
<feature type="active site" description="Proton donor" evidence="1">
    <location>
        <position position="59"/>
    </location>
</feature>
<feature type="binding site" evidence="1">
    <location>
        <position position="58"/>
    </location>
    <ligand>
        <name>substrate</name>
    </ligand>
</feature>
<feature type="binding site" evidence="1">
    <location>
        <begin position="74"/>
        <end position="76"/>
    </location>
    <ligand>
        <name>substrate</name>
    </ligand>
</feature>
<feature type="modified residue" description="Pyruvic acid (Ser)" evidence="1">
    <location>
        <position position="26"/>
    </location>
</feature>
<protein>
    <recommendedName>
        <fullName evidence="1">Aspartate 1-decarboxylase</fullName>
        <ecNumber evidence="1">4.1.1.11</ecNumber>
    </recommendedName>
    <alternativeName>
        <fullName evidence="1">Aspartate alpha-decarboxylase</fullName>
    </alternativeName>
    <component>
        <recommendedName>
            <fullName evidence="1">Aspartate 1-decarboxylase beta chain</fullName>
        </recommendedName>
    </component>
    <component>
        <recommendedName>
            <fullName evidence="1">Aspartate 1-decarboxylase alpha chain</fullName>
        </recommendedName>
    </component>
</protein>
<sequence length="133" mass="14608">MAYRKMLKSKIHRACVTQADLDYEGSITISPELLKAANILPYEAVNVWNITAGTRFETYAITGEKGSTDICVNGAAAHLVTPGDLVIIASFTQILEEDCAAHEPTVVFVDQFNRLKEIRPERIGVKNKIPCSA</sequence>
<keyword id="KW-0068">Autocatalytic cleavage</keyword>
<keyword id="KW-0963">Cytoplasm</keyword>
<keyword id="KW-0210">Decarboxylase</keyword>
<keyword id="KW-0456">Lyase</keyword>
<keyword id="KW-0566">Pantothenate biosynthesis</keyword>
<keyword id="KW-0670">Pyruvate</keyword>
<keyword id="KW-0704">Schiff base</keyword>
<keyword id="KW-0865">Zymogen</keyword>
<organism>
    <name type="scientific">Legionella pneumophila (strain Lens)</name>
    <dbReference type="NCBI Taxonomy" id="297245"/>
    <lineage>
        <taxon>Bacteria</taxon>
        <taxon>Pseudomonadati</taxon>
        <taxon>Pseudomonadota</taxon>
        <taxon>Gammaproteobacteria</taxon>
        <taxon>Legionellales</taxon>
        <taxon>Legionellaceae</taxon>
        <taxon>Legionella</taxon>
    </lineage>
</organism>
<dbReference type="EC" id="4.1.1.11" evidence="1"/>
<dbReference type="EMBL" id="CR628337">
    <property type="protein sequence ID" value="CAH17100.1"/>
    <property type="molecule type" value="Genomic_DNA"/>
</dbReference>
<dbReference type="RefSeq" id="WP_011216771.1">
    <property type="nucleotide sequence ID" value="NC_006369.1"/>
</dbReference>
<dbReference type="SMR" id="Q5WSM2"/>
<dbReference type="KEGG" id="lpf:lpl2856"/>
<dbReference type="LegioList" id="lpl2856"/>
<dbReference type="HOGENOM" id="CLU_115305_2_0_6"/>
<dbReference type="UniPathway" id="UPA00028">
    <property type="reaction ID" value="UER00002"/>
</dbReference>
<dbReference type="Proteomes" id="UP000002517">
    <property type="component" value="Chromosome"/>
</dbReference>
<dbReference type="GO" id="GO:0005829">
    <property type="term" value="C:cytosol"/>
    <property type="evidence" value="ECO:0007669"/>
    <property type="project" value="TreeGrafter"/>
</dbReference>
<dbReference type="GO" id="GO:0004068">
    <property type="term" value="F:aspartate 1-decarboxylase activity"/>
    <property type="evidence" value="ECO:0007669"/>
    <property type="project" value="UniProtKB-UniRule"/>
</dbReference>
<dbReference type="GO" id="GO:0006523">
    <property type="term" value="P:alanine biosynthetic process"/>
    <property type="evidence" value="ECO:0007669"/>
    <property type="project" value="InterPro"/>
</dbReference>
<dbReference type="GO" id="GO:0015940">
    <property type="term" value="P:pantothenate biosynthetic process"/>
    <property type="evidence" value="ECO:0007669"/>
    <property type="project" value="UniProtKB-UniRule"/>
</dbReference>
<dbReference type="CDD" id="cd06919">
    <property type="entry name" value="Asp_decarbox"/>
    <property type="match status" value="1"/>
</dbReference>
<dbReference type="Gene3D" id="2.40.40.20">
    <property type="match status" value="1"/>
</dbReference>
<dbReference type="HAMAP" id="MF_00446">
    <property type="entry name" value="PanD"/>
    <property type="match status" value="1"/>
</dbReference>
<dbReference type="InterPro" id="IPR009010">
    <property type="entry name" value="Asp_de-COase-like_dom_sf"/>
</dbReference>
<dbReference type="InterPro" id="IPR003190">
    <property type="entry name" value="Asp_decarbox"/>
</dbReference>
<dbReference type="NCBIfam" id="TIGR00223">
    <property type="entry name" value="panD"/>
    <property type="match status" value="1"/>
</dbReference>
<dbReference type="PANTHER" id="PTHR21012">
    <property type="entry name" value="ASPARTATE 1-DECARBOXYLASE"/>
    <property type="match status" value="1"/>
</dbReference>
<dbReference type="PANTHER" id="PTHR21012:SF0">
    <property type="entry name" value="ASPARTATE 1-DECARBOXYLASE"/>
    <property type="match status" value="1"/>
</dbReference>
<dbReference type="Pfam" id="PF02261">
    <property type="entry name" value="Asp_decarbox"/>
    <property type="match status" value="1"/>
</dbReference>
<dbReference type="PIRSF" id="PIRSF006246">
    <property type="entry name" value="Asp_decarbox"/>
    <property type="match status" value="1"/>
</dbReference>
<dbReference type="SUPFAM" id="SSF50692">
    <property type="entry name" value="ADC-like"/>
    <property type="match status" value="1"/>
</dbReference>
<comment type="function">
    <text evidence="1">Catalyzes the pyruvoyl-dependent decarboxylation of aspartate to produce beta-alanine.</text>
</comment>
<comment type="catalytic activity">
    <reaction evidence="1">
        <text>L-aspartate + H(+) = beta-alanine + CO2</text>
        <dbReference type="Rhea" id="RHEA:19497"/>
        <dbReference type="ChEBI" id="CHEBI:15378"/>
        <dbReference type="ChEBI" id="CHEBI:16526"/>
        <dbReference type="ChEBI" id="CHEBI:29991"/>
        <dbReference type="ChEBI" id="CHEBI:57966"/>
        <dbReference type="EC" id="4.1.1.11"/>
    </reaction>
</comment>
<comment type="cofactor">
    <cofactor evidence="1">
        <name>pyruvate</name>
        <dbReference type="ChEBI" id="CHEBI:15361"/>
    </cofactor>
    <text evidence="1">Binds 1 pyruvoyl group covalently per subunit.</text>
</comment>
<comment type="pathway">
    <text evidence="1">Cofactor biosynthesis; (R)-pantothenate biosynthesis; beta-alanine from L-aspartate: step 1/1.</text>
</comment>
<comment type="subunit">
    <text evidence="1">Heterooctamer of four alpha and four beta subunits.</text>
</comment>
<comment type="subcellular location">
    <subcellularLocation>
        <location evidence="1">Cytoplasm</location>
    </subcellularLocation>
</comment>
<comment type="PTM">
    <text evidence="1">Is synthesized initially as an inactive proenzyme, which is activated by self-cleavage at a specific serine bond to produce a beta-subunit with a hydroxyl group at its C-terminus and an alpha-subunit with a pyruvoyl group at its N-terminus.</text>
</comment>
<comment type="similarity">
    <text evidence="1">Belongs to the PanD family.</text>
</comment>
<name>PAND_LEGPL</name>
<gene>
    <name evidence="1" type="primary">panD</name>
    <name type="ordered locus">lpl2856</name>
</gene>